<proteinExistence type="inferred from homology"/>
<feature type="chain" id="PRO_1000074831" description="Leucine--tRNA ligase">
    <location>
        <begin position="1"/>
        <end position="921"/>
    </location>
</feature>
<feature type="short sequence motif" description="'HIGH' region">
    <location>
        <begin position="41"/>
        <end position="52"/>
    </location>
</feature>
<feature type="short sequence motif" description="'KMSKS' region">
    <location>
        <begin position="695"/>
        <end position="699"/>
    </location>
</feature>
<feature type="binding site" evidence="1">
    <location>
        <position position="698"/>
    </location>
    <ligand>
        <name>ATP</name>
        <dbReference type="ChEBI" id="CHEBI:30616"/>
    </ligand>
</feature>
<dbReference type="EC" id="6.1.1.4" evidence="1"/>
<dbReference type="EMBL" id="CP000383">
    <property type="protein sequence ID" value="ABG58559.1"/>
    <property type="molecule type" value="Genomic_DNA"/>
</dbReference>
<dbReference type="RefSeq" id="WP_011584674.1">
    <property type="nucleotide sequence ID" value="NC_008255.1"/>
</dbReference>
<dbReference type="SMR" id="Q11VK7"/>
<dbReference type="STRING" id="269798.CHU_1287"/>
<dbReference type="KEGG" id="chu:CHU_1287"/>
<dbReference type="eggNOG" id="COG0495">
    <property type="taxonomic scope" value="Bacteria"/>
</dbReference>
<dbReference type="HOGENOM" id="CLU_004427_0_0_10"/>
<dbReference type="OrthoDB" id="9810365at2"/>
<dbReference type="Proteomes" id="UP000001822">
    <property type="component" value="Chromosome"/>
</dbReference>
<dbReference type="GO" id="GO:0005829">
    <property type="term" value="C:cytosol"/>
    <property type="evidence" value="ECO:0007669"/>
    <property type="project" value="TreeGrafter"/>
</dbReference>
<dbReference type="GO" id="GO:0002161">
    <property type="term" value="F:aminoacyl-tRNA deacylase activity"/>
    <property type="evidence" value="ECO:0007669"/>
    <property type="project" value="InterPro"/>
</dbReference>
<dbReference type="GO" id="GO:0005524">
    <property type="term" value="F:ATP binding"/>
    <property type="evidence" value="ECO:0007669"/>
    <property type="project" value="UniProtKB-UniRule"/>
</dbReference>
<dbReference type="GO" id="GO:0004823">
    <property type="term" value="F:leucine-tRNA ligase activity"/>
    <property type="evidence" value="ECO:0007669"/>
    <property type="project" value="UniProtKB-UniRule"/>
</dbReference>
<dbReference type="GO" id="GO:0006429">
    <property type="term" value="P:leucyl-tRNA aminoacylation"/>
    <property type="evidence" value="ECO:0007669"/>
    <property type="project" value="UniProtKB-UniRule"/>
</dbReference>
<dbReference type="CDD" id="cd07958">
    <property type="entry name" value="Anticodon_Ia_Leu_BEm"/>
    <property type="match status" value="1"/>
</dbReference>
<dbReference type="CDD" id="cd00812">
    <property type="entry name" value="LeuRS_core"/>
    <property type="match status" value="1"/>
</dbReference>
<dbReference type="FunFam" id="3.40.50.620:FF:000056">
    <property type="entry name" value="Leucine--tRNA ligase"/>
    <property type="match status" value="1"/>
</dbReference>
<dbReference type="FunFam" id="3.40.50.620:FF:000060">
    <property type="entry name" value="Leucine--tRNA ligase"/>
    <property type="match status" value="1"/>
</dbReference>
<dbReference type="FunFam" id="1.10.730.10:FF:000011">
    <property type="entry name" value="Leucine--tRNA ligase chloroplastic/mitochondrial"/>
    <property type="match status" value="1"/>
</dbReference>
<dbReference type="Gene3D" id="3.40.50.620">
    <property type="entry name" value="HUPs"/>
    <property type="match status" value="3"/>
</dbReference>
<dbReference type="Gene3D" id="1.10.730.10">
    <property type="entry name" value="Isoleucyl-tRNA Synthetase, Domain 1"/>
    <property type="match status" value="2"/>
</dbReference>
<dbReference type="HAMAP" id="MF_00049_B">
    <property type="entry name" value="Leu_tRNA_synth_B"/>
    <property type="match status" value="1"/>
</dbReference>
<dbReference type="InterPro" id="IPR002300">
    <property type="entry name" value="aa-tRNA-synth_Ia"/>
</dbReference>
<dbReference type="InterPro" id="IPR002302">
    <property type="entry name" value="Leu-tRNA-ligase"/>
</dbReference>
<dbReference type="InterPro" id="IPR025709">
    <property type="entry name" value="Leu_tRNA-synth_edit"/>
</dbReference>
<dbReference type="InterPro" id="IPR013155">
    <property type="entry name" value="M/V/L/I-tRNA-synth_anticd-bd"/>
</dbReference>
<dbReference type="InterPro" id="IPR014729">
    <property type="entry name" value="Rossmann-like_a/b/a_fold"/>
</dbReference>
<dbReference type="InterPro" id="IPR009080">
    <property type="entry name" value="tRNAsynth_Ia_anticodon-bd"/>
</dbReference>
<dbReference type="InterPro" id="IPR009008">
    <property type="entry name" value="Val/Leu/Ile-tRNA-synth_edit"/>
</dbReference>
<dbReference type="NCBIfam" id="TIGR00396">
    <property type="entry name" value="leuS_bact"/>
    <property type="match status" value="1"/>
</dbReference>
<dbReference type="PANTHER" id="PTHR43740:SF2">
    <property type="entry name" value="LEUCINE--TRNA LIGASE, MITOCHONDRIAL"/>
    <property type="match status" value="1"/>
</dbReference>
<dbReference type="PANTHER" id="PTHR43740">
    <property type="entry name" value="LEUCYL-TRNA SYNTHETASE"/>
    <property type="match status" value="1"/>
</dbReference>
<dbReference type="Pfam" id="PF08264">
    <property type="entry name" value="Anticodon_1"/>
    <property type="match status" value="1"/>
</dbReference>
<dbReference type="Pfam" id="PF00133">
    <property type="entry name" value="tRNA-synt_1"/>
    <property type="match status" value="2"/>
</dbReference>
<dbReference type="Pfam" id="PF13603">
    <property type="entry name" value="tRNA-synt_1_2"/>
    <property type="match status" value="1"/>
</dbReference>
<dbReference type="PRINTS" id="PR00985">
    <property type="entry name" value="TRNASYNTHLEU"/>
</dbReference>
<dbReference type="SUPFAM" id="SSF47323">
    <property type="entry name" value="Anticodon-binding domain of a subclass of class I aminoacyl-tRNA synthetases"/>
    <property type="match status" value="1"/>
</dbReference>
<dbReference type="SUPFAM" id="SSF52374">
    <property type="entry name" value="Nucleotidylyl transferase"/>
    <property type="match status" value="1"/>
</dbReference>
<dbReference type="SUPFAM" id="SSF50677">
    <property type="entry name" value="ValRS/IleRS/LeuRS editing domain"/>
    <property type="match status" value="1"/>
</dbReference>
<organism>
    <name type="scientific">Cytophaga hutchinsonii (strain ATCC 33406 / DSM 1761 / CIP 103989 / NBRC 15051 / NCIMB 9469 / D465)</name>
    <dbReference type="NCBI Taxonomy" id="269798"/>
    <lineage>
        <taxon>Bacteria</taxon>
        <taxon>Pseudomonadati</taxon>
        <taxon>Bacteroidota</taxon>
        <taxon>Cytophagia</taxon>
        <taxon>Cytophagales</taxon>
        <taxon>Cytophagaceae</taxon>
        <taxon>Cytophaga</taxon>
    </lineage>
</organism>
<accession>Q11VK7</accession>
<comment type="catalytic activity">
    <reaction evidence="1">
        <text>tRNA(Leu) + L-leucine + ATP = L-leucyl-tRNA(Leu) + AMP + diphosphate</text>
        <dbReference type="Rhea" id="RHEA:11688"/>
        <dbReference type="Rhea" id="RHEA-COMP:9613"/>
        <dbReference type="Rhea" id="RHEA-COMP:9622"/>
        <dbReference type="ChEBI" id="CHEBI:30616"/>
        <dbReference type="ChEBI" id="CHEBI:33019"/>
        <dbReference type="ChEBI" id="CHEBI:57427"/>
        <dbReference type="ChEBI" id="CHEBI:78442"/>
        <dbReference type="ChEBI" id="CHEBI:78494"/>
        <dbReference type="ChEBI" id="CHEBI:456215"/>
        <dbReference type="EC" id="6.1.1.4"/>
    </reaction>
</comment>
<comment type="subcellular location">
    <subcellularLocation>
        <location evidence="1">Cytoplasm</location>
    </subcellularLocation>
</comment>
<comment type="similarity">
    <text evidence="1">Belongs to the class-I aminoacyl-tRNA synthetase family.</text>
</comment>
<keyword id="KW-0030">Aminoacyl-tRNA synthetase</keyword>
<keyword id="KW-0067">ATP-binding</keyword>
<keyword id="KW-0963">Cytoplasm</keyword>
<keyword id="KW-0436">Ligase</keyword>
<keyword id="KW-0547">Nucleotide-binding</keyword>
<keyword id="KW-0648">Protein biosynthesis</keyword>
<keyword id="KW-1185">Reference proteome</keyword>
<protein>
    <recommendedName>
        <fullName evidence="1">Leucine--tRNA ligase</fullName>
        <ecNumber evidence="1">6.1.1.4</ecNumber>
    </recommendedName>
    <alternativeName>
        <fullName evidence="1">Leucyl-tRNA synthetase</fullName>
        <shortName evidence="1">LeuRS</shortName>
    </alternativeName>
</protein>
<reference key="1">
    <citation type="journal article" date="2007" name="Appl. Environ. Microbiol.">
        <title>Genome sequence of the cellulolytic gliding bacterium Cytophaga hutchinsonii.</title>
        <authorList>
            <person name="Xie G."/>
            <person name="Bruce D.C."/>
            <person name="Challacombe J.F."/>
            <person name="Chertkov O."/>
            <person name="Detter J.C."/>
            <person name="Gilna P."/>
            <person name="Han C.S."/>
            <person name="Lucas S."/>
            <person name="Misra M."/>
            <person name="Myers G.L."/>
            <person name="Richardson P."/>
            <person name="Tapia R."/>
            <person name="Thayer N."/>
            <person name="Thompson L.S."/>
            <person name="Brettin T.S."/>
            <person name="Henrissat B."/>
            <person name="Wilson D.B."/>
            <person name="McBride M.J."/>
        </authorList>
    </citation>
    <scope>NUCLEOTIDE SEQUENCE [LARGE SCALE GENOMIC DNA]</scope>
    <source>
        <strain>ATCC 33406 / DSM 1761 / JCM 20678 / CIP 103989 / IAM 12607 / NBRC 15051 / NCIMB 9469 / D465</strain>
    </source>
</reference>
<name>SYL_CYTH3</name>
<evidence type="ECO:0000255" key="1">
    <source>
        <dbReference type="HAMAP-Rule" id="MF_00049"/>
    </source>
</evidence>
<gene>
    <name evidence="1" type="primary">leuS</name>
    <name type="ordered locus">CHU_1287</name>
</gene>
<sequence>MADYHFGEVENKWQSKWNAEKTFKALENSSKPKYFVLDMFPYPSGSGLHVGHPLGYIASDIMARYKRIKGYNVLHPMGFDSFGLPAEQYAVQTGQHPAITTEQNIARYIEQLNKIGFSFDWDREIRTSDPAYYKWTQWIFIQLFNHWYNKASDKAEPITNLVKQFETAGNAGINAACDEDAVTFTAADWKSYSEKQQSDTLLKYRLTYLSETMVNWCPGLGTVLANEEVKDGLSERGGFPVERKKMKQWSMRITAYADRLLKGLDTIDWPEAMKEMQRYWIGKSLGAMLTFKVVDKDMELTVFTTRIDTTFGVTYVSIAPEHEWIGALTSPEQKAAVEEYVTKAKNRSERDRMSDVKTVSGCFTGSYVTNPFNNEKIPVWIADYVLAGYGTGVVMAVPSSDERDYKFASFYKLPIISVQEGAHTDITKEDFDPKAGTMINSGFLNGLTVKQAIPEAIKFIEEKKIGFAKINFKMRDSIFGRQRYWGEPIPVSYKNDIPYVLNESELPLALPAIDEYKPTETGEPPLARNKAFADKGYELSTMPGWAGSSWYFMRYMDPQNKTAVAAADKINYWGQVDLYMGGAEHATGHLLYSRFWNKFLFDMGITPNDEPFAKLINQGMIQGVSKFAYRINGTNKFVSAGLKKEYDTTPIHVDVSIVHNDVLDTEAFKKWRPDFASAEFILENNTYVCGSEVEKMSKSKFNVVNPDDIVNKYGADTLRMYEMFLGPLEQSKPWNTNGIEGVYKFLNRFWRLFHDTAGNFAVSDAQPTAEELKVLHKTLKRVEEDIERFSFNTPVSTFMICVNELGSLKCNKRTILEPLTIALSPLAPHIAEELWSLLGHTTSVSTATYPAWDEKFLVESNHEYPISINGKMRAKLNLPVDMPAAEVEQQVLANEVVQKWLEGKAPKKIIVIPNKIVNVVM</sequence>